<protein>
    <recommendedName>
        <fullName evidence="1">3-ketoacyl-CoA thiolase</fullName>
        <ecNumber evidence="1">2.3.1.16</ecNumber>
    </recommendedName>
    <alternativeName>
        <fullName evidence="1">Acetyl-CoA acyltransferase</fullName>
    </alternativeName>
    <alternativeName>
        <fullName evidence="1">Beta-ketothiolase</fullName>
    </alternativeName>
    <alternativeName>
        <fullName evidence="1">Fatty acid oxidation complex subunit beta</fullName>
    </alternativeName>
</protein>
<organism>
    <name type="scientific">Escherichia coli O6:K15:H31 (strain 536 / UPEC)</name>
    <dbReference type="NCBI Taxonomy" id="362663"/>
    <lineage>
        <taxon>Bacteria</taxon>
        <taxon>Pseudomonadati</taxon>
        <taxon>Pseudomonadota</taxon>
        <taxon>Gammaproteobacteria</taxon>
        <taxon>Enterobacterales</taxon>
        <taxon>Enterobacteriaceae</taxon>
        <taxon>Escherichia</taxon>
    </lineage>
</organism>
<feature type="chain" id="PRO_0000292890" description="3-ketoacyl-CoA thiolase">
    <location>
        <begin position="1"/>
        <end position="387"/>
    </location>
</feature>
<feature type="active site" description="Acyl-thioester intermediate" evidence="1">
    <location>
        <position position="91"/>
    </location>
</feature>
<feature type="active site" description="Proton acceptor" evidence="1">
    <location>
        <position position="343"/>
    </location>
</feature>
<feature type="active site" description="Proton acceptor" evidence="1">
    <location>
        <position position="373"/>
    </location>
</feature>
<proteinExistence type="inferred from homology"/>
<reference key="1">
    <citation type="journal article" date="2006" name="Mol. Microbiol.">
        <title>Role of pathogenicity island-associated integrases in the genome plasticity of uropathogenic Escherichia coli strain 536.</title>
        <authorList>
            <person name="Hochhut B."/>
            <person name="Wilde C."/>
            <person name="Balling G."/>
            <person name="Middendorf B."/>
            <person name="Dobrindt U."/>
            <person name="Brzuszkiewicz E."/>
            <person name="Gottschalk G."/>
            <person name="Carniel E."/>
            <person name="Hacker J."/>
        </authorList>
    </citation>
    <scope>NUCLEOTIDE SEQUENCE [LARGE SCALE GENOMIC DNA]</scope>
    <source>
        <strain>536 / UPEC</strain>
    </source>
</reference>
<evidence type="ECO:0000255" key="1">
    <source>
        <dbReference type="HAMAP-Rule" id="MF_01620"/>
    </source>
</evidence>
<sequence length="387" mass="40756">MEQVVIVDAIRTPMGRSKGGAFRNVRAEDLSAHLMRSLLARNPALEAAALDDIYWGCVQQTLEQGFNIARNAALLAEVPHSVPAVTVNRLCGSSMQALHDAARMIMTGDAQACLVGGVEHMGHVPMSHGVDFHPGLSRNVAKAAGMMGLTAEMLARMHGISREMQDAFAARSHARAWAATQSGAFKNEIIPTGGHDADGVLKQFNYDEVIRPETTVEALATLRPAFDPVSGTVTAGTSSALSDGAAAMLVMSESRARDLGLKPRACVRSMAVVGCDPSIMGYGPVPASKLALKKAGLSASDIGVFEMNEAFAAQILPCIKDLGLMEQIDEKINLNGGAIALGHPLGCSGARISTTLLNLMEHKDVQFGLATMCIGLGQGIATVFERV</sequence>
<name>FADA_ECOL5</name>
<keyword id="KW-0012">Acyltransferase</keyword>
<keyword id="KW-0963">Cytoplasm</keyword>
<keyword id="KW-0276">Fatty acid metabolism</keyword>
<keyword id="KW-0442">Lipid degradation</keyword>
<keyword id="KW-0443">Lipid metabolism</keyword>
<keyword id="KW-0808">Transferase</keyword>
<accession>Q0TAL1</accession>
<gene>
    <name evidence="1" type="primary">fadA</name>
    <name type="ordered locus">ECP_4058</name>
</gene>
<comment type="function">
    <text evidence="1">Catalyzes the final step of fatty acid oxidation in which acetyl-CoA is released and the CoA ester of a fatty acid two carbons shorter is formed.</text>
</comment>
<comment type="catalytic activity">
    <reaction evidence="1">
        <text>an acyl-CoA + acetyl-CoA = a 3-oxoacyl-CoA + CoA</text>
        <dbReference type="Rhea" id="RHEA:21564"/>
        <dbReference type="ChEBI" id="CHEBI:57287"/>
        <dbReference type="ChEBI" id="CHEBI:57288"/>
        <dbReference type="ChEBI" id="CHEBI:58342"/>
        <dbReference type="ChEBI" id="CHEBI:90726"/>
        <dbReference type="EC" id="2.3.1.16"/>
    </reaction>
</comment>
<comment type="pathway">
    <text evidence="1">Lipid metabolism; fatty acid beta-oxidation.</text>
</comment>
<comment type="subunit">
    <text evidence="1">Heterotetramer of two alpha chains (FadB) and two beta chains (FadA).</text>
</comment>
<comment type="subcellular location">
    <subcellularLocation>
        <location evidence="1">Cytoplasm</location>
    </subcellularLocation>
</comment>
<comment type="similarity">
    <text evidence="1">Belongs to the thiolase-like superfamily. Thiolase family.</text>
</comment>
<dbReference type="EC" id="2.3.1.16" evidence="1"/>
<dbReference type="EMBL" id="CP000247">
    <property type="protein sequence ID" value="ABG72018.1"/>
    <property type="molecule type" value="Genomic_DNA"/>
</dbReference>
<dbReference type="RefSeq" id="WP_000438744.1">
    <property type="nucleotide sequence ID" value="NC_008253.1"/>
</dbReference>
<dbReference type="SMR" id="Q0TAL1"/>
<dbReference type="KEGG" id="ecp:ECP_4058"/>
<dbReference type="HOGENOM" id="CLU_031026_2_3_6"/>
<dbReference type="UniPathway" id="UPA00659"/>
<dbReference type="Proteomes" id="UP000009182">
    <property type="component" value="Chromosome"/>
</dbReference>
<dbReference type="GO" id="GO:0005737">
    <property type="term" value="C:cytoplasm"/>
    <property type="evidence" value="ECO:0007669"/>
    <property type="project" value="UniProtKB-SubCell"/>
</dbReference>
<dbReference type="GO" id="GO:0003988">
    <property type="term" value="F:acetyl-CoA C-acyltransferase activity"/>
    <property type="evidence" value="ECO:0007669"/>
    <property type="project" value="UniProtKB-UniRule"/>
</dbReference>
<dbReference type="GO" id="GO:0006635">
    <property type="term" value="P:fatty acid beta-oxidation"/>
    <property type="evidence" value="ECO:0007669"/>
    <property type="project" value="UniProtKB-UniRule"/>
</dbReference>
<dbReference type="GO" id="GO:0010124">
    <property type="term" value="P:phenylacetate catabolic process"/>
    <property type="evidence" value="ECO:0007669"/>
    <property type="project" value="TreeGrafter"/>
</dbReference>
<dbReference type="CDD" id="cd00751">
    <property type="entry name" value="thiolase"/>
    <property type="match status" value="1"/>
</dbReference>
<dbReference type="FunFam" id="3.40.47.10:FF:000010">
    <property type="entry name" value="Acetyl-CoA acetyltransferase (Thiolase)"/>
    <property type="match status" value="1"/>
</dbReference>
<dbReference type="Gene3D" id="3.40.47.10">
    <property type="match status" value="2"/>
</dbReference>
<dbReference type="HAMAP" id="MF_01620">
    <property type="entry name" value="FadA"/>
    <property type="match status" value="1"/>
</dbReference>
<dbReference type="InterPro" id="IPR012805">
    <property type="entry name" value="FadA"/>
</dbReference>
<dbReference type="InterPro" id="IPR002155">
    <property type="entry name" value="Thiolase"/>
</dbReference>
<dbReference type="InterPro" id="IPR016039">
    <property type="entry name" value="Thiolase-like"/>
</dbReference>
<dbReference type="InterPro" id="IPR050215">
    <property type="entry name" value="Thiolase-like_sf_Thiolase"/>
</dbReference>
<dbReference type="InterPro" id="IPR020615">
    <property type="entry name" value="Thiolase_acyl_enz_int_AS"/>
</dbReference>
<dbReference type="InterPro" id="IPR020610">
    <property type="entry name" value="Thiolase_AS"/>
</dbReference>
<dbReference type="InterPro" id="IPR020617">
    <property type="entry name" value="Thiolase_C"/>
</dbReference>
<dbReference type="InterPro" id="IPR020613">
    <property type="entry name" value="Thiolase_CS"/>
</dbReference>
<dbReference type="InterPro" id="IPR020616">
    <property type="entry name" value="Thiolase_N"/>
</dbReference>
<dbReference type="NCBIfam" id="TIGR01930">
    <property type="entry name" value="AcCoA-C-Actrans"/>
    <property type="match status" value="1"/>
</dbReference>
<dbReference type="NCBIfam" id="TIGR02445">
    <property type="entry name" value="fadA"/>
    <property type="match status" value="1"/>
</dbReference>
<dbReference type="NCBIfam" id="NF006510">
    <property type="entry name" value="PRK08947.1"/>
    <property type="match status" value="1"/>
</dbReference>
<dbReference type="PANTHER" id="PTHR43853:SF11">
    <property type="entry name" value="3-KETOACYL-COA THIOLASE FADA"/>
    <property type="match status" value="1"/>
</dbReference>
<dbReference type="PANTHER" id="PTHR43853">
    <property type="entry name" value="3-KETOACYL-COA THIOLASE, PEROXISOMAL"/>
    <property type="match status" value="1"/>
</dbReference>
<dbReference type="Pfam" id="PF02803">
    <property type="entry name" value="Thiolase_C"/>
    <property type="match status" value="1"/>
</dbReference>
<dbReference type="Pfam" id="PF00108">
    <property type="entry name" value="Thiolase_N"/>
    <property type="match status" value="1"/>
</dbReference>
<dbReference type="PIRSF" id="PIRSF000429">
    <property type="entry name" value="Ac-CoA_Ac_transf"/>
    <property type="match status" value="1"/>
</dbReference>
<dbReference type="SUPFAM" id="SSF53901">
    <property type="entry name" value="Thiolase-like"/>
    <property type="match status" value="2"/>
</dbReference>
<dbReference type="PROSITE" id="PS00098">
    <property type="entry name" value="THIOLASE_1"/>
    <property type="match status" value="1"/>
</dbReference>
<dbReference type="PROSITE" id="PS00737">
    <property type="entry name" value="THIOLASE_2"/>
    <property type="match status" value="1"/>
</dbReference>
<dbReference type="PROSITE" id="PS00099">
    <property type="entry name" value="THIOLASE_3"/>
    <property type="match status" value="1"/>
</dbReference>